<dbReference type="EMBL" id="X97274">
    <property type="protein sequence ID" value="CAA65929.1"/>
    <property type="molecule type" value="mRNA"/>
</dbReference>
<dbReference type="RefSeq" id="NP_001117149.1">
    <property type="nucleotide sequence ID" value="NM_001123677.1"/>
</dbReference>
<dbReference type="STRING" id="8030.ENSSSAP00000083157"/>
<dbReference type="PaxDb" id="8030-ENSSSAP00000083157"/>
<dbReference type="Ensembl" id="ENSSSAT00020178152">
    <property type="protein sequence ID" value="ENSSSAP00020135682"/>
    <property type="gene ID" value="ENSSSAG00020075134"/>
</dbReference>
<dbReference type="Ensembl" id="ENSSSAT00070017686">
    <property type="protein sequence ID" value="ENSSSAP00070016765"/>
    <property type="gene ID" value="ENSSSAG00070011225"/>
</dbReference>
<dbReference type="Ensembl" id="ENSSSAT00075096012">
    <property type="protein sequence ID" value="ENSSSAP00075069693"/>
    <property type="gene ID" value="ENSSSAG00075045786"/>
</dbReference>
<dbReference type="GeneID" id="100136589"/>
<dbReference type="KEGG" id="sasa:100136589"/>
<dbReference type="Proteomes" id="UP000087266">
    <property type="component" value="Chromosome ssa16"/>
</dbReference>
<dbReference type="Bgee" id="ENSSSAG00000068127">
    <property type="expression patterns" value="Expressed in midgut and 26 other cell types or tissues"/>
</dbReference>
<dbReference type="GO" id="GO:0046870">
    <property type="term" value="F:cadmium ion binding"/>
    <property type="evidence" value="ECO:0000250"/>
    <property type="project" value="AgBase"/>
</dbReference>
<dbReference type="GO" id="GO:0008270">
    <property type="term" value="F:zinc ion binding"/>
    <property type="evidence" value="ECO:0000250"/>
    <property type="project" value="AgBase"/>
</dbReference>
<dbReference type="GO" id="GO:0051259">
    <property type="term" value="P:protein complex oligomerization"/>
    <property type="evidence" value="ECO:0000250"/>
    <property type="project" value="AgBase"/>
</dbReference>
<dbReference type="GO" id="GO:0046686">
    <property type="term" value="P:response to cadmium ion"/>
    <property type="evidence" value="ECO:0000250"/>
    <property type="project" value="AgBase"/>
</dbReference>
<dbReference type="GO" id="GO:0046688">
    <property type="term" value="P:response to copper ion"/>
    <property type="evidence" value="ECO:0000250"/>
    <property type="project" value="AgBase"/>
</dbReference>
<dbReference type="GO" id="GO:0046689">
    <property type="term" value="P:response to mercury ion"/>
    <property type="evidence" value="ECO:0000250"/>
    <property type="project" value="AgBase"/>
</dbReference>
<dbReference type="GO" id="GO:0010043">
    <property type="term" value="P:response to zinc ion"/>
    <property type="evidence" value="ECO:0000250"/>
    <property type="project" value="AgBase"/>
</dbReference>
<dbReference type="FunFam" id="4.10.10.10:FF:000001">
    <property type="entry name" value="Metallothionein"/>
    <property type="match status" value="1"/>
</dbReference>
<dbReference type="Gene3D" id="4.10.10.10">
    <property type="entry name" value="Metallothionein Isoform II"/>
    <property type="match status" value="1"/>
</dbReference>
<dbReference type="InterPro" id="IPR017854">
    <property type="entry name" value="Metalthion_dom_sf"/>
</dbReference>
<dbReference type="InterPro" id="IPR023587">
    <property type="entry name" value="Metalthion_dom_sf_vert"/>
</dbReference>
<dbReference type="InterPro" id="IPR000006">
    <property type="entry name" value="Metalthion_vert"/>
</dbReference>
<dbReference type="InterPro" id="IPR018064">
    <property type="entry name" value="Metalthion_vert_metal_BS"/>
</dbReference>
<dbReference type="PANTHER" id="PTHR23299">
    <property type="entry name" value="METALLOTHIONEIN"/>
    <property type="match status" value="1"/>
</dbReference>
<dbReference type="PANTHER" id="PTHR23299:SF24">
    <property type="entry name" value="METALLOTHIONEIN-1X"/>
    <property type="match status" value="1"/>
</dbReference>
<dbReference type="Pfam" id="PF00131">
    <property type="entry name" value="Metallothio"/>
    <property type="match status" value="1"/>
</dbReference>
<dbReference type="PRINTS" id="PR00860">
    <property type="entry name" value="MTVERTEBRATE"/>
</dbReference>
<dbReference type="SUPFAM" id="SSF57868">
    <property type="entry name" value="Metallothionein"/>
    <property type="match status" value="1"/>
</dbReference>
<dbReference type="PROSITE" id="PS00203">
    <property type="entry name" value="METALLOTHIONEIN_VRT"/>
    <property type="match status" value="1"/>
</dbReference>
<gene>
    <name type="primary">mta</name>
</gene>
<keyword id="KW-0479">Metal-binding</keyword>
<keyword id="KW-0480">Metal-thiolate cluster</keyword>
<keyword id="KW-1185">Reference proteome</keyword>
<evidence type="ECO:0000250" key="1"/>
<evidence type="ECO:0000250" key="2">
    <source>
        <dbReference type="UniProtKB" id="P02795"/>
    </source>
</evidence>
<evidence type="ECO:0000250" key="3">
    <source>
        <dbReference type="UniProtKB" id="P62339"/>
    </source>
</evidence>
<evidence type="ECO:0000305" key="4"/>
<feature type="chain" id="PRO_0000197314" description="Metallothionein A">
    <location>
        <begin position="1"/>
        <end position="61"/>
    </location>
</feature>
<feature type="region of interest" description="Beta">
    <location>
        <begin position="1"/>
        <end position="28"/>
    </location>
</feature>
<feature type="region of interest" description="Alpha">
    <location>
        <begin position="29"/>
        <end position="61"/>
    </location>
</feature>
<feature type="binding site" evidence="2">
    <location>
        <position position="4"/>
    </location>
    <ligand>
        <name>a divalent metal cation</name>
        <dbReference type="ChEBI" id="CHEBI:60240"/>
        <label>1</label>
        <note>in cluster B</note>
    </ligand>
</feature>
<feature type="binding site" evidence="2">
    <location>
        <position position="6"/>
    </location>
    <ligand>
        <name>a divalent metal cation</name>
        <dbReference type="ChEBI" id="CHEBI:60240"/>
        <label>1</label>
        <note>in cluster B</note>
    </ligand>
</feature>
<feature type="binding site" evidence="2">
    <location>
        <position position="6"/>
    </location>
    <ligand>
        <name>a divalent metal cation</name>
        <dbReference type="ChEBI" id="CHEBI:60240"/>
        <label>2</label>
        <note>in cluster B</note>
    </ligand>
</feature>
<feature type="binding site" evidence="2">
    <location>
        <position position="12"/>
    </location>
    <ligand>
        <name>a divalent metal cation</name>
        <dbReference type="ChEBI" id="CHEBI:60240"/>
        <label>2</label>
        <note>in cluster B</note>
    </ligand>
</feature>
<feature type="binding site" evidence="2">
    <location>
        <position position="14"/>
    </location>
    <ligand>
        <name>a divalent metal cation</name>
        <dbReference type="ChEBI" id="CHEBI:60240"/>
        <label>2</label>
        <note>in cluster B</note>
    </ligand>
</feature>
<feature type="binding site" evidence="2">
    <location>
        <position position="14"/>
    </location>
    <ligand>
        <name>a divalent metal cation</name>
        <dbReference type="ChEBI" id="CHEBI:60240"/>
        <label>3</label>
        <note>in cluster B</note>
    </ligand>
</feature>
<feature type="binding site" evidence="2">
    <location>
        <position position="18"/>
    </location>
    <ligand>
        <name>a divalent metal cation</name>
        <dbReference type="ChEBI" id="CHEBI:60240"/>
        <label>3</label>
        <note>in cluster B</note>
    </ligand>
</feature>
<feature type="binding site" evidence="2">
    <location>
        <position position="20"/>
    </location>
    <ligand>
        <name>a divalent metal cation</name>
        <dbReference type="ChEBI" id="CHEBI:60240"/>
        <label>1</label>
        <note>in cluster B</note>
    </ligand>
</feature>
<feature type="binding site" evidence="2">
    <location>
        <position position="23"/>
    </location>
    <ligand>
        <name>a divalent metal cation</name>
        <dbReference type="ChEBI" id="CHEBI:60240"/>
        <label>1</label>
        <note>in cluster B</note>
    </ligand>
</feature>
<feature type="binding site" evidence="2">
    <location>
        <position position="23"/>
    </location>
    <ligand>
        <name>a divalent metal cation</name>
        <dbReference type="ChEBI" id="CHEBI:60240"/>
        <label>3</label>
        <note>in cluster B</note>
    </ligand>
</feature>
<feature type="binding site" evidence="2">
    <location>
        <position position="25"/>
    </location>
    <ligand>
        <name>a divalent metal cation</name>
        <dbReference type="ChEBI" id="CHEBI:60240"/>
        <label>2</label>
        <note>in cluster B</note>
    </ligand>
</feature>
<feature type="binding site" evidence="2">
    <location>
        <position position="28"/>
    </location>
    <ligand>
        <name>a divalent metal cation</name>
        <dbReference type="ChEBI" id="CHEBI:60240"/>
        <label>3</label>
        <note>in cluster B</note>
    </ligand>
</feature>
<feature type="binding site" evidence="2">
    <location>
        <position position="33"/>
    </location>
    <ligand>
        <name>a divalent metal cation</name>
        <dbReference type="ChEBI" id="CHEBI:60240"/>
        <label>4</label>
        <note>in cluster A</note>
    </ligand>
</feature>
<feature type="binding site" evidence="2">
    <location>
        <position position="34"/>
    </location>
    <ligand>
        <name>a divalent metal cation</name>
        <dbReference type="ChEBI" id="CHEBI:60240"/>
        <label>4</label>
        <note>in cluster A</note>
    </ligand>
</feature>
<feature type="binding site" evidence="2">
    <location>
        <position position="34"/>
    </location>
    <ligand>
        <name>a divalent metal cation</name>
        <dbReference type="ChEBI" id="CHEBI:60240"/>
        <label>5</label>
        <note>in cluster A</note>
    </ligand>
</feature>
<feature type="binding site" evidence="2">
    <location>
        <position position="36"/>
    </location>
    <ligand>
        <name>a divalent metal cation</name>
        <dbReference type="ChEBI" id="CHEBI:60240"/>
        <label>5</label>
        <note>in cluster A</note>
    </ligand>
</feature>
<feature type="binding site" evidence="2">
    <location>
        <position position="37"/>
    </location>
    <ligand>
        <name>a divalent metal cation</name>
        <dbReference type="ChEBI" id="CHEBI:60240"/>
        <label>5</label>
        <note>in cluster A</note>
    </ligand>
</feature>
<feature type="binding site" evidence="2">
    <location>
        <position position="37"/>
    </location>
    <ligand>
        <name>a divalent metal cation</name>
        <dbReference type="ChEBI" id="CHEBI:60240"/>
        <label>6</label>
        <note>in cluster A</note>
    </ligand>
</feature>
<feature type="binding site" evidence="2">
    <location>
        <position position="41"/>
    </location>
    <ligand>
        <name>a divalent metal cation</name>
        <dbReference type="ChEBI" id="CHEBI:60240"/>
        <label>6</label>
        <note>in cluster A</note>
    </ligand>
</feature>
<feature type="binding site" evidence="2">
    <location>
        <position position="44"/>
    </location>
    <ligand>
        <name>a divalent metal cation</name>
        <dbReference type="ChEBI" id="CHEBI:60240"/>
        <label>4</label>
        <note>in cluster A</note>
    </ligand>
</feature>
<feature type="binding site" evidence="2">
    <location>
        <position position="44"/>
    </location>
    <ligand>
        <name>a divalent metal cation</name>
        <dbReference type="ChEBI" id="CHEBI:60240"/>
        <label>6</label>
        <note>in cluster A</note>
    </ligand>
</feature>
<feature type="binding site" evidence="2">
    <location>
        <position position="48"/>
    </location>
    <ligand>
        <name>a divalent metal cation</name>
        <dbReference type="ChEBI" id="CHEBI:60240"/>
        <label>4</label>
        <note>in cluster A</note>
    </ligand>
</feature>
<feature type="binding site" evidence="2">
    <location>
        <position position="50"/>
    </location>
    <ligand>
        <name>a divalent metal cation</name>
        <dbReference type="ChEBI" id="CHEBI:60240"/>
        <label>5</label>
        <note>in cluster A</note>
    </ligand>
</feature>
<feature type="binding site" evidence="2">
    <location>
        <position position="50"/>
    </location>
    <ligand>
        <name>a divalent metal cation</name>
        <dbReference type="ChEBI" id="CHEBI:60240"/>
        <label>7</label>
        <note>in cluster A</note>
    </ligand>
</feature>
<feature type="binding site" evidence="3">
    <location>
        <position position="55"/>
    </location>
    <ligand>
        <name>a divalent metal cation</name>
        <dbReference type="ChEBI" id="CHEBI:60240"/>
        <label>7</label>
        <note>in cluster A</note>
    </ligand>
</feature>
<feature type="binding site" evidence="2">
    <location>
        <position position="59"/>
    </location>
    <ligand>
        <name>a divalent metal cation</name>
        <dbReference type="ChEBI" id="CHEBI:60240"/>
        <label>7</label>
        <note>in cluster A</note>
    </ligand>
</feature>
<feature type="binding site" evidence="2">
    <location>
        <position position="60"/>
    </location>
    <ligand>
        <name>a divalent metal cation</name>
        <dbReference type="ChEBI" id="CHEBI:60240"/>
        <label>6</label>
        <note>in cluster A</note>
    </ligand>
</feature>
<feature type="binding site" evidence="2">
    <location>
        <position position="60"/>
    </location>
    <ligand>
        <name>a divalent metal cation</name>
        <dbReference type="ChEBI" id="CHEBI:60240"/>
        <label>7</label>
        <note>in cluster A</note>
    </ligand>
</feature>
<organism>
    <name type="scientific">Salmo salar</name>
    <name type="common">Atlantic salmon</name>
    <dbReference type="NCBI Taxonomy" id="8030"/>
    <lineage>
        <taxon>Eukaryota</taxon>
        <taxon>Metazoa</taxon>
        <taxon>Chordata</taxon>
        <taxon>Craniata</taxon>
        <taxon>Vertebrata</taxon>
        <taxon>Euteleostomi</taxon>
        <taxon>Actinopterygii</taxon>
        <taxon>Neopterygii</taxon>
        <taxon>Teleostei</taxon>
        <taxon>Protacanthopterygii</taxon>
        <taxon>Salmoniformes</taxon>
        <taxon>Salmonidae</taxon>
        <taxon>Salmoninae</taxon>
        <taxon>Salmo</taxon>
    </lineage>
</organism>
<proteinExistence type="inferred from homology"/>
<accession>P68504</accession>
<accession>P09861</accession>
<comment type="function">
    <text evidence="1">Metallothioneins have a high content of cysteine residues that bind various heavy metals.</text>
</comment>
<comment type="domain">
    <text>Class I metallothioneins contain 2 metal-binding domains: four divalent ions are chelated within cluster A of the alpha domain and are coordinated via cysteinyl thiolate bridges to 11 cysteine ligands. Cluster B, the corresponding region within the beta domain, can ligate three divalent ions to 9 cysteines.</text>
</comment>
<comment type="similarity">
    <text evidence="4">Belongs to the metallothionein superfamily. Type 1 family.</text>
</comment>
<sequence>MDPCECSKTGSCNCGGSCKCSNCACTSCKKASCCDCCPSGCSKCASGCVCKGKTCDTSCCQ</sequence>
<reference key="1">
    <citation type="submission" date="1996-04" db="EMBL/GenBank/DDBJ databases">
        <title>The use of metallothionein genes for determining the phylogenetic and evolutionary relationship between extant teleosts.</title>
        <authorList>
            <person name="Kille P."/>
            <person name="Olsson P.-E."/>
        </authorList>
    </citation>
    <scope>NUCLEOTIDE SEQUENCE [MRNA]</scope>
    <source>
        <tissue>Liver</tissue>
    </source>
</reference>
<name>MTA_SALSA</name>
<protein>
    <recommendedName>
        <fullName>Metallothionein A</fullName>
        <shortName>MT-A</shortName>
    </recommendedName>
</protein>